<gene>
    <name evidence="1" type="primary">aspS</name>
    <name type="ordered locus">APP7_1208</name>
</gene>
<name>SYD_ACTP7</name>
<accession>B3GY37</accession>
<comment type="function">
    <text evidence="1">Catalyzes the attachment of L-aspartate to tRNA(Asp) in a two-step reaction: L-aspartate is first activated by ATP to form Asp-AMP and then transferred to the acceptor end of tRNA(Asp).</text>
</comment>
<comment type="catalytic activity">
    <reaction evidence="1">
        <text>tRNA(Asp) + L-aspartate + ATP = L-aspartyl-tRNA(Asp) + AMP + diphosphate</text>
        <dbReference type="Rhea" id="RHEA:19649"/>
        <dbReference type="Rhea" id="RHEA-COMP:9660"/>
        <dbReference type="Rhea" id="RHEA-COMP:9678"/>
        <dbReference type="ChEBI" id="CHEBI:29991"/>
        <dbReference type="ChEBI" id="CHEBI:30616"/>
        <dbReference type="ChEBI" id="CHEBI:33019"/>
        <dbReference type="ChEBI" id="CHEBI:78442"/>
        <dbReference type="ChEBI" id="CHEBI:78516"/>
        <dbReference type="ChEBI" id="CHEBI:456215"/>
        <dbReference type="EC" id="6.1.1.12"/>
    </reaction>
</comment>
<comment type="subunit">
    <text evidence="1">Homodimer.</text>
</comment>
<comment type="subcellular location">
    <subcellularLocation>
        <location evidence="1">Cytoplasm</location>
    </subcellularLocation>
</comment>
<comment type="similarity">
    <text evidence="1">Belongs to the class-II aminoacyl-tRNA synthetase family. Type 1 subfamily.</text>
</comment>
<keyword id="KW-0030">Aminoacyl-tRNA synthetase</keyword>
<keyword id="KW-0067">ATP-binding</keyword>
<keyword id="KW-0963">Cytoplasm</keyword>
<keyword id="KW-0436">Ligase</keyword>
<keyword id="KW-0547">Nucleotide-binding</keyword>
<keyword id="KW-0648">Protein biosynthesis</keyword>
<sequence>MMRSHYCGALNRSHVGQTVTLSGWVHRVRNLGRFIFMQIRDREGIVQVFFDEKDEAIFKIASSLRSEACVQIQGEVIARDESQINKEMATGEIEVLVKNVVVYNNADVLPLDFNQNNTEEQRLKYRYLDLRRPEMAEKLKTRAKITSFVRRYMDDNGFLDIETPMLTKATPEGARDYLVPSRVHNGKFYALPQSPQLFKQLLMMSGFDRYYQIVKCFRDEDLRADRQPEFTQIDVETSFLTAEEVRELMENMIHGLWLDRLNVDLGKFPIMTWQEAMQRFGSDKPDLRNPLELVDVADILKDVEFKVFNEPANSADGRVTVLRVPNGASLTRKQIDEYTQFVGIYGAKGLAWAKINDVNAGMEGIQSPVAKFLNEEVFKALIERTNATSGDILFFGADKWQVVTDSMGALRLKVGRDLALTDLSAWKPLWVIDFPMFEKDDEGNLSAMHHPFTSPKNLTPEELAANPVNAVANAYDMVINGYEVGGGSVRIYDPKMQQTVFGILGINEQDQQEKFGFLLDALKFGTPPHAGLAFGLDRLTMLITGTENIRDVIAFPKTTAAACLMTEAPSFANPQALEELGIAVLKKEKAE</sequence>
<organism>
    <name type="scientific">Actinobacillus pleuropneumoniae serotype 7 (strain AP76)</name>
    <dbReference type="NCBI Taxonomy" id="537457"/>
    <lineage>
        <taxon>Bacteria</taxon>
        <taxon>Pseudomonadati</taxon>
        <taxon>Pseudomonadota</taxon>
        <taxon>Gammaproteobacteria</taxon>
        <taxon>Pasteurellales</taxon>
        <taxon>Pasteurellaceae</taxon>
        <taxon>Actinobacillus</taxon>
    </lineage>
</organism>
<feature type="chain" id="PRO_1000090952" description="Aspartate--tRNA ligase">
    <location>
        <begin position="1"/>
        <end position="591"/>
    </location>
</feature>
<feature type="region of interest" description="Aspartate" evidence="1">
    <location>
        <begin position="196"/>
        <end position="199"/>
    </location>
</feature>
<feature type="binding site" evidence="1">
    <location>
        <position position="172"/>
    </location>
    <ligand>
        <name>L-aspartate</name>
        <dbReference type="ChEBI" id="CHEBI:29991"/>
    </ligand>
</feature>
<feature type="binding site" evidence="1">
    <location>
        <begin position="218"/>
        <end position="220"/>
    </location>
    <ligand>
        <name>ATP</name>
        <dbReference type="ChEBI" id="CHEBI:30616"/>
    </ligand>
</feature>
<feature type="binding site" evidence="1">
    <location>
        <position position="218"/>
    </location>
    <ligand>
        <name>L-aspartate</name>
        <dbReference type="ChEBI" id="CHEBI:29991"/>
    </ligand>
</feature>
<feature type="binding site" evidence="1">
    <location>
        <position position="227"/>
    </location>
    <ligand>
        <name>ATP</name>
        <dbReference type="ChEBI" id="CHEBI:30616"/>
    </ligand>
</feature>
<feature type="binding site" evidence="1">
    <location>
        <position position="449"/>
    </location>
    <ligand>
        <name>L-aspartate</name>
        <dbReference type="ChEBI" id="CHEBI:29991"/>
    </ligand>
</feature>
<feature type="binding site" evidence="1">
    <location>
        <position position="483"/>
    </location>
    <ligand>
        <name>ATP</name>
        <dbReference type="ChEBI" id="CHEBI:30616"/>
    </ligand>
</feature>
<feature type="binding site" evidence="1">
    <location>
        <position position="490"/>
    </location>
    <ligand>
        <name>L-aspartate</name>
        <dbReference type="ChEBI" id="CHEBI:29991"/>
    </ligand>
</feature>
<feature type="binding site" evidence="1">
    <location>
        <begin position="535"/>
        <end position="538"/>
    </location>
    <ligand>
        <name>ATP</name>
        <dbReference type="ChEBI" id="CHEBI:30616"/>
    </ligand>
</feature>
<evidence type="ECO:0000255" key="1">
    <source>
        <dbReference type="HAMAP-Rule" id="MF_00044"/>
    </source>
</evidence>
<reference key="1">
    <citation type="submission" date="2008-06" db="EMBL/GenBank/DDBJ databases">
        <title>Genome and proteome analysis of A. pleuropneumoniae serotype 7.</title>
        <authorList>
            <person name="Linke B."/>
            <person name="Buettner F."/>
            <person name="Martinez-Arias R."/>
            <person name="Goesmann A."/>
            <person name="Baltes N."/>
            <person name="Tegetmeyer H."/>
            <person name="Singh M."/>
            <person name="Gerlach G.F."/>
        </authorList>
    </citation>
    <scope>NUCLEOTIDE SEQUENCE [LARGE SCALE GENOMIC DNA]</scope>
    <source>
        <strain>AP76</strain>
    </source>
</reference>
<protein>
    <recommendedName>
        <fullName evidence="1">Aspartate--tRNA ligase</fullName>
        <ecNumber evidence="1">6.1.1.12</ecNumber>
    </recommendedName>
    <alternativeName>
        <fullName evidence="1">Aspartyl-tRNA synthetase</fullName>
        <shortName evidence="1">AspRS</shortName>
    </alternativeName>
</protein>
<proteinExistence type="inferred from homology"/>
<dbReference type="EC" id="6.1.1.12" evidence="1"/>
<dbReference type="EMBL" id="CP001091">
    <property type="protein sequence ID" value="ACE61860.1"/>
    <property type="molecule type" value="Genomic_DNA"/>
</dbReference>
<dbReference type="RefSeq" id="WP_005612578.1">
    <property type="nucleotide sequence ID" value="NC_010939.1"/>
</dbReference>
<dbReference type="SMR" id="B3GY37"/>
<dbReference type="KEGG" id="apa:APP7_1208"/>
<dbReference type="HOGENOM" id="CLU_014330_3_2_6"/>
<dbReference type="Proteomes" id="UP000001226">
    <property type="component" value="Chromosome"/>
</dbReference>
<dbReference type="GO" id="GO:0005737">
    <property type="term" value="C:cytoplasm"/>
    <property type="evidence" value="ECO:0007669"/>
    <property type="project" value="UniProtKB-SubCell"/>
</dbReference>
<dbReference type="GO" id="GO:0004815">
    <property type="term" value="F:aspartate-tRNA ligase activity"/>
    <property type="evidence" value="ECO:0007669"/>
    <property type="project" value="UniProtKB-UniRule"/>
</dbReference>
<dbReference type="GO" id="GO:0005524">
    <property type="term" value="F:ATP binding"/>
    <property type="evidence" value="ECO:0007669"/>
    <property type="project" value="UniProtKB-UniRule"/>
</dbReference>
<dbReference type="GO" id="GO:0003676">
    <property type="term" value="F:nucleic acid binding"/>
    <property type="evidence" value="ECO:0007669"/>
    <property type="project" value="InterPro"/>
</dbReference>
<dbReference type="GO" id="GO:0006422">
    <property type="term" value="P:aspartyl-tRNA aminoacylation"/>
    <property type="evidence" value="ECO:0007669"/>
    <property type="project" value="UniProtKB-UniRule"/>
</dbReference>
<dbReference type="CDD" id="cd00777">
    <property type="entry name" value="AspRS_core"/>
    <property type="match status" value="1"/>
</dbReference>
<dbReference type="CDD" id="cd04317">
    <property type="entry name" value="EcAspRS_like_N"/>
    <property type="match status" value="1"/>
</dbReference>
<dbReference type="Gene3D" id="3.30.930.10">
    <property type="entry name" value="Bira Bifunctional Protein, Domain 2"/>
    <property type="match status" value="1"/>
</dbReference>
<dbReference type="Gene3D" id="3.30.1360.30">
    <property type="entry name" value="GAD-like domain"/>
    <property type="match status" value="1"/>
</dbReference>
<dbReference type="Gene3D" id="2.40.50.140">
    <property type="entry name" value="Nucleic acid-binding proteins"/>
    <property type="match status" value="1"/>
</dbReference>
<dbReference type="HAMAP" id="MF_00044">
    <property type="entry name" value="Asp_tRNA_synth_type1"/>
    <property type="match status" value="1"/>
</dbReference>
<dbReference type="InterPro" id="IPR004364">
    <property type="entry name" value="Aa-tRNA-synt_II"/>
</dbReference>
<dbReference type="InterPro" id="IPR006195">
    <property type="entry name" value="aa-tRNA-synth_II"/>
</dbReference>
<dbReference type="InterPro" id="IPR045864">
    <property type="entry name" value="aa-tRNA-synth_II/BPL/LPL"/>
</dbReference>
<dbReference type="InterPro" id="IPR004524">
    <property type="entry name" value="Asp-tRNA-ligase_1"/>
</dbReference>
<dbReference type="InterPro" id="IPR047089">
    <property type="entry name" value="Asp-tRNA-ligase_1_N"/>
</dbReference>
<dbReference type="InterPro" id="IPR002312">
    <property type="entry name" value="Asp/Asn-tRNA-synth_IIb"/>
</dbReference>
<dbReference type="InterPro" id="IPR047090">
    <property type="entry name" value="AspRS_core"/>
</dbReference>
<dbReference type="InterPro" id="IPR004115">
    <property type="entry name" value="GAD-like_sf"/>
</dbReference>
<dbReference type="InterPro" id="IPR029351">
    <property type="entry name" value="GAD_dom"/>
</dbReference>
<dbReference type="InterPro" id="IPR012340">
    <property type="entry name" value="NA-bd_OB-fold"/>
</dbReference>
<dbReference type="InterPro" id="IPR004365">
    <property type="entry name" value="NA-bd_OB_tRNA"/>
</dbReference>
<dbReference type="NCBIfam" id="TIGR00459">
    <property type="entry name" value="aspS_bact"/>
    <property type="match status" value="1"/>
</dbReference>
<dbReference type="NCBIfam" id="NF001750">
    <property type="entry name" value="PRK00476.1"/>
    <property type="match status" value="1"/>
</dbReference>
<dbReference type="PANTHER" id="PTHR22594:SF5">
    <property type="entry name" value="ASPARTATE--TRNA LIGASE, MITOCHONDRIAL"/>
    <property type="match status" value="1"/>
</dbReference>
<dbReference type="PANTHER" id="PTHR22594">
    <property type="entry name" value="ASPARTYL/LYSYL-TRNA SYNTHETASE"/>
    <property type="match status" value="1"/>
</dbReference>
<dbReference type="Pfam" id="PF02938">
    <property type="entry name" value="GAD"/>
    <property type="match status" value="1"/>
</dbReference>
<dbReference type="Pfam" id="PF00152">
    <property type="entry name" value="tRNA-synt_2"/>
    <property type="match status" value="1"/>
</dbReference>
<dbReference type="Pfam" id="PF01336">
    <property type="entry name" value="tRNA_anti-codon"/>
    <property type="match status" value="1"/>
</dbReference>
<dbReference type="PRINTS" id="PR01042">
    <property type="entry name" value="TRNASYNTHASP"/>
</dbReference>
<dbReference type="SUPFAM" id="SSF55681">
    <property type="entry name" value="Class II aaRS and biotin synthetases"/>
    <property type="match status" value="1"/>
</dbReference>
<dbReference type="SUPFAM" id="SSF55261">
    <property type="entry name" value="GAD domain-like"/>
    <property type="match status" value="1"/>
</dbReference>
<dbReference type="SUPFAM" id="SSF50249">
    <property type="entry name" value="Nucleic acid-binding proteins"/>
    <property type="match status" value="1"/>
</dbReference>
<dbReference type="PROSITE" id="PS50862">
    <property type="entry name" value="AA_TRNA_LIGASE_II"/>
    <property type="match status" value="1"/>
</dbReference>